<dbReference type="EMBL" id="AE000513">
    <property type="protein sequence ID" value="AAF10350.1"/>
    <property type="molecule type" value="Genomic_DNA"/>
</dbReference>
<dbReference type="PIR" id="G75477">
    <property type="entry name" value="G75477"/>
</dbReference>
<dbReference type="RefSeq" id="NP_294498.1">
    <property type="nucleotide sequence ID" value="NC_001263.1"/>
</dbReference>
<dbReference type="PDB" id="8CO1">
    <property type="method" value="EM"/>
    <property type="resolution" value="2.56 A"/>
    <property type="chains" value="A1/B1/C1/D1/E1/F1/G1/H1/I1/L1/M1/N1/O1/P1/Q1=1-740"/>
</dbReference>
<dbReference type="PDBsum" id="8CO1"/>
<dbReference type="EMDB" id="EMD-16770"/>
<dbReference type="SMR" id="Q9RW95"/>
<dbReference type="STRING" id="243230.DR_0774"/>
<dbReference type="PaxDb" id="243230-DR_0774"/>
<dbReference type="EnsemblBacteria" id="AAF10350">
    <property type="protein sequence ID" value="AAF10350"/>
    <property type="gene ID" value="DR_0774"/>
</dbReference>
<dbReference type="KEGG" id="dra:DR_0774"/>
<dbReference type="PATRIC" id="fig|243230.17.peg.954"/>
<dbReference type="eggNOG" id="COG1450">
    <property type="taxonomic scope" value="Bacteria"/>
</dbReference>
<dbReference type="HOGENOM" id="CLU_398870_0_0_0"/>
<dbReference type="InParanoid" id="Q9RW95"/>
<dbReference type="OrthoDB" id="9775455at2"/>
<dbReference type="Proteomes" id="UP000002524">
    <property type="component" value="Chromosome 1"/>
</dbReference>
<dbReference type="GO" id="GO:0030313">
    <property type="term" value="C:cell envelope"/>
    <property type="evidence" value="ECO:0007669"/>
    <property type="project" value="UniProtKB-SubCell"/>
</dbReference>
<dbReference type="GO" id="GO:0015627">
    <property type="term" value="C:type II protein secretion system complex"/>
    <property type="evidence" value="ECO:0000318"/>
    <property type="project" value="GO_Central"/>
</dbReference>
<dbReference type="GO" id="GO:0009306">
    <property type="term" value="P:protein secretion"/>
    <property type="evidence" value="ECO:0000318"/>
    <property type="project" value="GO_Central"/>
</dbReference>
<dbReference type="Gene3D" id="3.30.1370.120">
    <property type="match status" value="1"/>
</dbReference>
<dbReference type="InterPro" id="IPR050810">
    <property type="entry name" value="Bact_Secretion_Sys_Channel"/>
</dbReference>
<dbReference type="InterPro" id="IPR005644">
    <property type="entry name" value="NolW-like"/>
</dbReference>
<dbReference type="InterPro" id="IPR038591">
    <property type="entry name" value="NolW-like_sf"/>
</dbReference>
<dbReference type="InterPro" id="IPR004846">
    <property type="entry name" value="T2SS/T3SS_dom"/>
</dbReference>
<dbReference type="PANTHER" id="PTHR30332">
    <property type="entry name" value="PROBABLE GENERAL SECRETION PATHWAY PROTEIN D"/>
    <property type="match status" value="1"/>
</dbReference>
<dbReference type="PANTHER" id="PTHR30332:SF17">
    <property type="entry name" value="TYPE IV PILIATION SYSTEM PROTEIN DR_0774-RELATED"/>
    <property type="match status" value="1"/>
</dbReference>
<dbReference type="Pfam" id="PF00263">
    <property type="entry name" value="Secretin"/>
    <property type="match status" value="1"/>
</dbReference>
<dbReference type="Pfam" id="PF03958">
    <property type="entry name" value="Secretin_N"/>
    <property type="match status" value="1"/>
</dbReference>
<feature type="signal peptide" evidence="1">
    <location>
        <begin position="1"/>
        <end position="20"/>
    </location>
</feature>
<feature type="chain" id="PRO_0000431097" description="Probable type IV piliation system protein DR_0774">
    <location>
        <begin position="21"/>
        <end position="740"/>
    </location>
</feature>
<accession>Q9RW95</accession>
<proteinExistence type="evidence at protein level"/>
<organism>
    <name type="scientific">Deinococcus radiodurans (strain ATCC 13939 / DSM 20539 / JCM 16871 / CCUG 27074 / LMG 4051 / NBRC 15346 / NCIMB 9279 / VKM B-1422 / R1)</name>
    <dbReference type="NCBI Taxonomy" id="243230"/>
    <lineage>
        <taxon>Bacteria</taxon>
        <taxon>Thermotogati</taxon>
        <taxon>Deinococcota</taxon>
        <taxon>Deinococci</taxon>
        <taxon>Deinococcales</taxon>
        <taxon>Deinococcaceae</taxon>
        <taxon>Deinococcus</taxon>
    </lineage>
</organism>
<keyword id="KW-0002">3D-structure</keyword>
<keyword id="KW-1185">Reference proteome</keyword>
<keyword id="KW-0732">Signal</keyword>
<sequence length="740" mass="78594">MNKRHALLLTAVLGMATAYAQTAPTTTTVNTLQTVYRDPSLTSAPITANVGKYVGPLSTFLASIAKSAGYEVVFNFNIDALALINGEIVFGNSTASVTTSYATPLGRPQELPAKPVVHNFSNAPFNEAWPLLMDVYELDYQLVKVGSANVIRIGQRPKQLALPLKFISAESALTAIEKFFGEEKFETVISLDSNNKPFQTTRPTGKFGLPNSIKVIPDSSNKRLIIGSNSEDGIRIRSFVETIDVQSSGKVISTDSISEIYIVRGQKESVLQFLRDSFPELIVTDYASGGLAIEGPRTSVNRAIILLGQVDRAPEIPIVQRIYTVRGQAADITALLAAQYPTLRVTPVGQTGQLVLNGAQAQLDTALALLEQVDRPAPVAESRTVQRVFQLVNASAEEVKATLEGTLARDLTADSNNDVLPNVPVTATDANGNTTVVSVPNALGKTANQGTANAQAQTAQTPANTQQATLIADKRTNSLIVRGTPEQVAQVAELVPQLDQVVPQINVQVRIQEVNERALQSLGLNWRATFGGFNVAVSGGTGLAATFNPTQSFLGFNIFPTLTALETQGLTRRVYDGNVTMQSGQRSLSATGGAQNASSGAAASVKSGGRLEINIPSAAGNIVRQIDYGLNLDFFSPQVAPDGTITLRIRGQVNQPATAITADSLPNLIDFTNSEAQSTITFKNGQTILMSGLLGSTETTNRSGVPFLSSLPGVGAAFGEKRTEKTQSQLLVIITGTVVK</sequence>
<name>DR774_DEIRA</name>
<comment type="function">
    <text evidence="3">Could be part of the type IV piliation system (T4P). May contribute at the cohesion between the S-layer and the outer membrane by forming oligomers. Could also be the main channel through which trafficking is managed.</text>
</comment>
<comment type="subcellular location">
    <subcellularLocation>
        <location evidence="2">Cell envelope</location>
    </subcellularLocation>
</comment>
<comment type="similarity">
    <text evidence="4">Belongs to the bacterial secretin family.</text>
</comment>
<gene>
    <name evidence="5" type="ordered locus">DR_0774</name>
</gene>
<protein>
    <recommendedName>
        <fullName evidence="4">Probable type IV piliation system protein DR_0774</fullName>
    </recommendedName>
</protein>
<reference key="1">
    <citation type="journal article" date="1999" name="Science">
        <title>Genome sequence of the radioresistant bacterium Deinococcus radiodurans R1.</title>
        <authorList>
            <person name="White O."/>
            <person name="Eisen J.A."/>
            <person name="Heidelberg J.F."/>
            <person name="Hickey E.K."/>
            <person name="Peterson J.D."/>
            <person name="Dodson R.J."/>
            <person name="Haft D.H."/>
            <person name="Gwinn M.L."/>
            <person name="Nelson W.C."/>
            <person name="Richardson D.L."/>
            <person name="Moffat K.S."/>
            <person name="Qin H."/>
            <person name="Jiang L."/>
            <person name="Pamphile W."/>
            <person name="Crosby M."/>
            <person name="Shen M."/>
            <person name="Vamathevan J.J."/>
            <person name="Lam P."/>
            <person name="McDonald L.A."/>
            <person name="Utterback T.R."/>
            <person name="Zalewski C."/>
            <person name="Makarova K.S."/>
            <person name="Aravind L."/>
            <person name="Daly M.J."/>
            <person name="Minton K.W."/>
            <person name="Fleischmann R.D."/>
            <person name="Ketchum K.A."/>
            <person name="Nelson K.E."/>
            <person name="Salzberg S.L."/>
            <person name="Smith H.O."/>
            <person name="Venter J.C."/>
            <person name="Fraser C.M."/>
        </authorList>
    </citation>
    <scope>NUCLEOTIDE SEQUENCE [LARGE SCALE GENOMIC DNA]</scope>
    <source>
        <strain>ATCC 13939 / DSM 20539 / JCM 16871 / CCUG 27074 / LMG 4051 / NBRC 15346 / NCIMB 9279 / VKM B-1422 / R1</strain>
    </source>
</reference>
<reference key="2">
    <citation type="journal article" date="2014" name="Biochim. Biophys. Acta">
        <title>New features of the cell wall of the radio-resistant bacterium Deinococcus radiodurans.</title>
        <authorList>
            <person name="Farci D."/>
            <person name="Bowler M.W."/>
            <person name="Kirkpatrick J."/>
            <person name="McSweeney S."/>
            <person name="Tramontano E."/>
            <person name="Piano D."/>
        </authorList>
    </citation>
    <scope>IDENTIFICATION BY MASS SPECTROMETRY</scope>
    <scope>FUNCTION</scope>
    <scope>SUBCELLULAR LOCATION</scope>
    <source>
        <strain>ATCC 13939 / DSM 20539 / JCM 16871 / CCUG 27074 / LMG 4051 / NBRC 15346 / NCIMB 9279 / VKM B-1422 / R1</strain>
    </source>
</reference>
<evidence type="ECO:0000255" key="1"/>
<evidence type="ECO:0000269" key="2">
    <source>
    </source>
</evidence>
<evidence type="ECO:0000303" key="3">
    <source>
    </source>
</evidence>
<evidence type="ECO:0000305" key="4"/>
<evidence type="ECO:0000312" key="5">
    <source>
        <dbReference type="EMBL" id="AAF10350.1"/>
    </source>
</evidence>